<reference key="1">
    <citation type="journal article" date="2005" name="PLoS Biol.">
        <title>The genome sequence of Rickettsia felis identifies the first putative conjugative plasmid in an obligate intracellular parasite.</title>
        <authorList>
            <person name="Ogata H."/>
            <person name="Renesto P."/>
            <person name="Audic S."/>
            <person name="Robert C."/>
            <person name="Blanc G."/>
            <person name="Fournier P.-E."/>
            <person name="Parinello H."/>
            <person name="Claverie J.-M."/>
            <person name="Raoult D."/>
        </authorList>
    </citation>
    <scope>NUCLEOTIDE SEQUENCE [LARGE SCALE GENOMIC DNA]</scope>
    <source>
        <strain>ATCC VR-1525 / URRWXCal2</strain>
    </source>
</reference>
<gene>
    <name evidence="1" type="primary">rplP</name>
    <name type="ordered locus">RF_0285</name>
</gene>
<organism>
    <name type="scientific">Rickettsia felis (strain ATCC VR-1525 / URRWXCal2)</name>
    <name type="common">Rickettsia azadi</name>
    <dbReference type="NCBI Taxonomy" id="315456"/>
    <lineage>
        <taxon>Bacteria</taxon>
        <taxon>Pseudomonadati</taxon>
        <taxon>Pseudomonadota</taxon>
        <taxon>Alphaproteobacteria</taxon>
        <taxon>Rickettsiales</taxon>
        <taxon>Rickettsiaceae</taxon>
        <taxon>Rickettsieae</taxon>
        <taxon>Rickettsia</taxon>
        <taxon>spotted fever group</taxon>
    </lineage>
</organism>
<protein>
    <recommendedName>
        <fullName evidence="1">Large ribosomal subunit protein uL16</fullName>
    </recommendedName>
    <alternativeName>
        <fullName evidence="2">50S ribosomal protein L16</fullName>
    </alternativeName>
</protein>
<name>RL16_RICFE</name>
<evidence type="ECO:0000255" key="1">
    <source>
        <dbReference type="HAMAP-Rule" id="MF_01342"/>
    </source>
</evidence>
<evidence type="ECO:0000305" key="2"/>
<accession>Q4UMS2</accession>
<feature type="chain" id="PRO_0000062188" description="Large ribosomal subunit protein uL16">
    <location>
        <begin position="1"/>
        <end position="136"/>
    </location>
</feature>
<proteinExistence type="inferred from homology"/>
<comment type="function">
    <text evidence="1">Binds 23S rRNA and is also seen to make contacts with the A and possibly P site tRNAs.</text>
</comment>
<comment type="subunit">
    <text evidence="1">Part of the 50S ribosomal subunit.</text>
</comment>
<comment type="similarity">
    <text evidence="1">Belongs to the universal ribosomal protein uL16 family.</text>
</comment>
<sequence>MLAPKKQKFRKAHKGRVASKAKAGTTLAFGSFGLKSIDGWRVTARQIEAGRKAATRCMKRQGRLWIRIFPDVPVSKKPAEVRMGKGKGSPEFFAVRVSPGRIMFEIEGVEENVALRALELASAKLPVRTRIVRRYE</sequence>
<keyword id="KW-0687">Ribonucleoprotein</keyword>
<keyword id="KW-0689">Ribosomal protein</keyword>
<keyword id="KW-0694">RNA-binding</keyword>
<keyword id="KW-0699">rRNA-binding</keyword>
<keyword id="KW-0820">tRNA-binding</keyword>
<dbReference type="EMBL" id="CP000053">
    <property type="protein sequence ID" value="AAY61136.1"/>
    <property type="molecule type" value="Genomic_DNA"/>
</dbReference>
<dbReference type="SMR" id="Q4UMS2"/>
<dbReference type="STRING" id="315456.RF_0285"/>
<dbReference type="KEGG" id="rfe:RF_0285"/>
<dbReference type="eggNOG" id="COG0197">
    <property type="taxonomic scope" value="Bacteria"/>
</dbReference>
<dbReference type="HOGENOM" id="CLU_078858_2_1_5"/>
<dbReference type="OrthoDB" id="9802589at2"/>
<dbReference type="Proteomes" id="UP000008548">
    <property type="component" value="Chromosome"/>
</dbReference>
<dbReference type="GO" id="GO:0022625">
    <property type="term" value="C:cytosolic large ribosomal subunit"/>
    <property type="evidence" value="ECO:0007669"/>
    <property type="project" value="TreeGrafter"/>
</dbReference>
<dbReference type="GO" id="GO:0019843">
    <property type="term" value="F:rRNA binding"/>
    <property type="evidence" value="ECO:0007669"/>
    <property type="project" value="UniProtKB-UniRule"/>
</dbReference>
<dbReference type="GO" id="GO:0003735">
    <property type="term" value="F:structural constituent of ribosome"/>
    <property type="evidence" value="ECO:0007669"/>
    <property type="project" value="InterPro"/>
</dbReference>
<dbReference type="GO" id="GO:0000049">
    <property type="term" value="F:tRNA binding"/>
    <property type="evidence" value="ECO:0007669"/>
    <property type="project" value="UniProtKB-KW"/>
</dbReference>
<dbReference type="GO" id="GO:0006412">
    <property type="term" value="P:translation"/>
    <property type="evidence" value="ECO:0007669"/>
    <property type="project" value="UniProtKB-UniRule"/>
</dbReference>
<dbReference type="CDD" id="cd01433">
    <property type="entry name" value="Ribosomal_L16_L10e"/>
    <property type="match status" value="1"/>
</dbReference>
<dbReference type="FunFam" id="3.90.1170.10:FF:000001">
    <property type="entry name" value="50S ribosomal protein L16"/>
    <property type="match status" value="1"/>
</dbReference>
<dbReference type="Gene3D" id="3.90.1170.10">
    <property type="entry name" value="Ribosomal protein L10e/L16"/>
    <property type="match status" value="1"/>
</dbReference>
<dbReference type="HAMAP" id="MF_01342">
    <property type="entry name" value="Ribosomal_uL16"/>
    <property type="match status" value="1"/>
</dbReference>
<dbReference type="InterPro" id="IPR047873">
    <property type="entry name" value="Ribosomal_uL16"/>
</dbReference>
<dbReference type="InterPro" id="IPR000114">
    <property type="entry name" value="Ribosomal_uL16_bact-type"/>
</dbReference>
<dbReference type="InterPro" id="IPR020798">
    <property type="entry name" value="Ribosomal_uL16_CS"/>
</dbReference>
<dbReference type="InterPro" id="IPR016180">
    <property type="entry name" value="Ribosomal_uL16_dom"/>
</dbReference>
<dbReference type="InterPro" id="IPR036920">
    <property type="entry name" value="Ribosomal_uL16_sf"/>
</dbReference>
<dbReference type="NCBIfam" id="TIGR01164">
    <property type="entry name" value="rplP_bact"/>
    <property type="match status" value="1"/>
</dbReference>
<dbReference type="PANTHER" id="PTHR12220">
    <property type="entry name" value="50S/60S RIBOSOMAL PROTEIN L16"/>
    <property type="match status" value="1"/>
</dbReference>
<dbReference type="PANTHER" id="PTHR12220:SF13">
    <property type="entry name" value="LARGE RIBOSOMAL SUBUNIT PROTEIN UL16M"/>
    <property type="match status" value="1"/>
</dbReference>
<dbReference type="Pfam" id="PF00252">
    <property type="entry name" value="Ribosomal_L16"/>
    <property type="match status" value="1"/>
</dbReference>
<dbReference type="PRINTS" id="PR00060">
    <property type="entry name" value="RIBOSOMALL16"/>
</dbReference>
<dbReference type="SUPFAM" id="SSF54686">
    <property type="entry name" value="Ribosomal protein L16p/L10e"/>
    <property type="match status" value="1"/>
</dbReference>
<dbReference type="PROSITE" id="PS00586">
    <property type="entry name" value="RIBOSOMAL_L16_1"/>
    <property type="match status" value="1"/>
</dbReference>
<dbReference type="PROSITE" id="PS00701">
    <property type="entry name" value="RIBOSOMAL_L16_2"/>
    <property type="match status" value="1"/>
</dbReference>